<name>CRLS1_RAT</name>
<feature type="chain" id="PRO_0000233262" description="Cardiolipin synthase (CMP-forming)">
    <location>
        <begin position="1"/>
        <end position="302"/>
    </location>
</feature>
<feature type="transmembrane region" description="Helical" evidence="2">
    <location>
        <begin position="109"/>
        <end position="129"/>
    </location>
</feature>
<feature type="transmembrane region" description="Helical" evidence="2">
    <location>
        <begin position="133"/>
        <end position="153"/>
    </location>
</feature>
<feature type="transmembrane region" description="Helical" evidence="2">
    <location>
        <begin position="190"/>
        <end position="212"/>
    </location>
</feature>
<feature type="transmembrane region" description="Helical" evidence="2">
    <location>
        <begin position="250"/>
        <end position="270"/>
    </location>
</feature>
<feature type="transmembrane region" description="Helical" evidence="2">
    <location>
        <begin position="271"/>
        <end position="289"/>
    </location>
</feature>
<feature type="region of interest" description="Disordered" evidence="3">
    <location>
        <begin position="65"/>
        <end position="84"/>
    </location>
</feature>
<feature type="compositionally biased region" description="Low complexity" evidence="3">
    <location>
        <begin position="71"/>
        <end position="84"/>
    </location>
</feature>
<comment type="function">
    <text evidence="1">Catalyzes the synthesis of cardiolipin (CL) (diphosphatidylglycerol) by specifically transferring a phosphatidyl group from CDP-diacylglycerol to phosphatidylglycerol (PG). CL is a key phospholipid in mitochondrial membranes and plays important roles in maintaining the functional integrity and dynamics of mitochondria under both optimal and stress conditions.</text>
</comment>
<comment type="catalytic activity">
    <reaction evidence="1">
        <text>a CDP-1,2-diacyl-sn-glycerol + a 1,2-diacyl-sn-glycero-3-phospho-(1'-sn-glycerol) = a cardiolipin + CMP + H(+)</text>
        <dbReference type="Rhea" id="RHEA:32931"/>
        <dbReference type="ChEBI" id="CHEBI:15378"/>
        <dbReference type="ChEBI" id="CHEBI:58332"/>
        <dbReference type="ChEBI" id="CHEBI:60377"/>
        <dbReference type="ChEBI" id="CHEBI:62237"/>
        <dbReference type="ChEBI" id="CHEBI:64716"/>
        <dbReference type="EC" id="2.7.8.41"/>
    </reaction>
</comment>
<comment type="cofactor">
    <cofactor evidence="1">
        <name>a divalent metal cation</name>
        <dbReference type="ChEBI" id="CHEBI:60240"/>
    </cofactor>
</comment>
<comment type="subcellular location">
    <subcellularLocation>
        <location evidence="1">Mitochondrion inner membrane</location>
        <topology evidence="1">Multi-pass membrane protein</topology>
    </subcellularLocation>
</comment>
<comment type="similarity">
    <text evidence="4">Belongs to the CDP-alcohol phosphatidyltransferase class-I family.</text>
</comment>
<sequence>MLAWRVARGAWGSLRVAVRPPGARLGRGGSRRALLPPAACCLGCLAERWRLRPAAFALRLPGTSPRTHCSGAGKAAPEPAAGGDAAAQAPSARWVRASATSSYENPWTIPNLLSMTRIGLAPVLGYLILEEDFNVALGVFALAGLTDLLDGFIARNWANQKSALGSALDPLADKVLISILYISLTYADLIPVPLTYMIISRDVMLIAAVFYVRYRTLPTPRTLAKYFNPCYATARLKPTFISKVNTAVQLILVAASLAAPVFNYADSIYLQILWCCTAFTTAASAYSYYHYGRKTVQVIKGK</sequence>
<reference key="1">
    <citation type="journal article" date="2004" name="Genome Res.">
        <title>The status, quality, and expansion of the NIH full-length cDNA project: the Mammalian Gene Collection (MGC).</title>
        <authorList>
            <consortium name="The MGC Project Team"/>
        </authorList>
    </citation>
    <scope>NUCLEOTIDE SEQUENCE [LARGE SCALE MRNA]</scope>
    <source>
        <tissue>Heart</tissue>
    </source>
</reference>
<gene>
    <name type="primary">Crls1</name>
</gene>
<protein>
    <recommendedName>
        <fullName>Cardiolipin synthase (CMP-forming)</fullName>
        <shortName>CLS</shortName>
        <ecNumber evidence="1">2.7.8.41</ecNumber>
    </recommendedName>
</protein>
<accession>Q5U2V5</accession>
<evidence type="ECO:0000250" key="1">
    <source>
        <dbReference type="UniProtKB" id="Q9UJA2"/>
    </source>
</evidence>
<evidence type="ECO:0000255" key="2"/>
<evidence type="ECO:0000256" key="3">
    <source>
        <dbReference type="SAM" id="MobiDB-lite"/>
    </source>
</evidence>
<evidence type="ECO:0000305" key="4"/>
<keyword id="KW-0444">Lipid biosynthesis</keyword>
<keyword id="KW-0443">Lipid metabolism</keyword>
<keyword id="KW-0472">Membrane</keyword>
<keyword id="KW-0496">Mitochondrion</keyword>
<keyword id="KW-0999">Mitochondrion inner membrane</keyword>
<keyword id="KW-0594">Phospholipid biosynthesis</keyword>
<keyword id="KW-1208">Phospholipid metabolism</keyword>
<keyword id="KW-1185">Reference proteome</keyword>
<keyword id="KW-0808">Transferase</keyword>
<keyword id="KW-0812">Transmembrane</keyword>
<keyword id="KW-1133">Transmembrane helix</keyword>
<organism>
    <name type="scientific">Rattus norvegicus</name>
    <name type="common">Rat</name>
    <dbReference type="NCBI Taxonomy" id="10116"/>
    <lineage>
        <taxon>Eukaryota</taxon>
        <taxon>Metazoa</taxon>
        <taxon>Chordata</taxon>
        <taxon>Craniata</taxon>
        <taxon>Vertebrata</taxon>
        <taxon>Euteleostomi</taxon>
        <taxon>Mammalia</taxon>
        <taxon>Eutheria</taxon>
        <taxon>Euarchontoglires</taxon>
        <taxon>Glires</taxon>
        <taxon>Rodentia</taxon>
        <taxon>Myomorpha</taxon>
        <taxon>Muroidea</taxon>
        <taxon>Muridae</taxon>
        <taxon>Murinae</taxon>
        <taxon>Rattus</taxon>
    </lineage>
</organism>
<proteinExistence type="evidence at transcript level"/>
<dbReference type="EC" id="2.7.8.41" evidence="1"/>
<dbReference type="EMBL" id="BC085849">
    <property type="protein sequence ID" value="AAH85849.1"/>
    <property type="molecule type" value="mRNA"/>
</dbReference>
<dbReference type="RefSeq" id="NP_001014280.1">
    <property type="nucleotide sequence ID" value="NM_001014258.1"/>
</dbReference>
<dbReference type="SMR" id="Q5U2V5"/>
<dbReference type="FunCoup" id="Q5U2V5">
    <property type="interactions" value="1901"/>
</dbReference>
<dbReference type="STRING" id="10116.ENSRNOP00000028900"/>
<dbReference type="PhosphoSitePlus" id="Q5U2V5"/>
<dbReference type="PaxDb" id="10116-ENSRNOP00000028900"/>
<dbReference type="Ensembl" id="ENSRNOT00000028900.7">
    <property type="protein sequence ID" value="ENSRNOP00000028900.5"/>
    <property type="gene ID" value="ENSRNOG00000021273.7"/>
</dbReference>
<dbReference type="GeneID" id="366196"/>
<dbReference type="KEGG" id="rno:366196"/>
<dbReference type="UCSC" id="RGD:1311037">
    <property type="organism name" value="rat"/>
</dbReference>
<dbReference type="AGR" id="RGD:1311037"/>
<dbReference type="CTD" id="54675"/>
<dbReference type="RGD" id="1311037">
    <property type="gene designation" value="Crls1"/>
</dbReference>
<dbReference type="eggNOG" id="KOG1617">
    <property type="taxonomic scope" value="Eukaryota"/>
</dbReference>
<dbReference type="GeneTree" id="ENSGT00390000001607"/>
<dbReference type="HOGENOM" id="CLU_051314_0_1_1"/>
<dbReference type="InParanoid" id="Q5U2V5"/>
<dbReference type="OMA" id="KRFNMAS"/>
<dbReference type="OrthoDB" id="10020554at2759"/>
<dbReference type="PhylomeDB" id="Q5U2V5"/>
<dbReference type="Reactome" id="R-RNO-1482925">
    <property type="pathway name" value="Acyl chain remodelling of PG"/>
</dbReference>
<dbReference type="Reactome" id="R-RNO-1483076">
    <property type="pathway name" value="Synthesis of CL"/>
</dbReference>
<dbReference type="SABIO-RK" id="Q5U2V5"/>
<dbReference type="PRO" id="PR:Q5U2V5"/>
<dbReference type="Proteomes" id="UP000002494">
    <property type="component" value="Chromosome 3"/>
</dbReference>
<dbReference type="Bgee" id="ENSRNOG00000021273">
    <property type="expression patterns" value="Expressed in ovary and 20 other cell types or tissues"/>
</dbReference>
<dbReference type="GO" id="GO:0005743">
    <property type="term" value="C:mitochondrial inner membrane"/>
    <property type="evidence" value="ECO:0000250"/>
    <property type="project" value="UniProtKB"/>
</dbReference>
<dbReference type="GO" id="GO:0031966">
    <property type="term" value="C:mitochondrial membrane"/>
    <property type="evidence" value="ECO:0000314"/>
    <property type="project" value="RGD"/>
</dbReference>
<dbReference type="GO" id="GO:0005739">
    <property type="term" value="C:mitochondrion"/>
    <property type="evidence" value="ECO:0000266"/>
    <property type="project" value="RGD"/>
</dbReference>
<dbReference type="GO" id="GO:0043337">
    <property type="term" value="F:cardiolipin synthase (CMP-forming)"/>
    <property type="evidence" value="ECO:0000314"/>
    <property type="project" value="RGD"/>
</dbReference>
<dbReference type="GO" id="GO:0032049">
    <property type="term" value="P:cardiolipin biosynthetic process"/>
    <property type="evidence" value="ECO:0000250"/>
    <property type="project" value="UniProtKB"/>
</dbReference>
<dbReference type="GO" id="GO:1905711">
    <property type="term" value="P:response to phosphatidylethanolamine"/>
    <property type="evidence" value="ECO:0000314"/>
    <property type="project" value="RGD"/>
</dbReference>
<dbReference type="GO" id="GO:0097068">
    <property type="term" value="P:response to thyroxine"/>
    <property type="evidence" value="ECO:0000314"/>
    <property type="project" value="RGD"/>
</dbReference>
<dbReference type="FunFam" id="1.20.120.1760:FF:000005">
    <property type="entry name" value="Cardiolipin synthase 1"/>
    <property type="match status" value="1"/>
</dbReference>
<dbReference type="Gene3D" id="1.20.120.1760">
    <property type="match status" value="1"/>
</dbReference>
<dbReference type="InterPro" id="IPR050324">
    <property type="entry name" value="CDP-alcohol_PTase-I"/>
</dbReference>
<dbReference type="InterPro" id="IPR000462">
    <property type="entry name" value="CDP-OH_P_trans"/>
</dbReference>
<dbReference type="InterPro" id="IPR043130">
    <property type="entry name" value="CDP-OH_PTrfase_TM_dom"/>
</dbReference>
<dbReference type="PANTHER" id="PTHR14269:SF60">
    <property type="entry name" value="CARDIOLIPIN SYNTHASE (CMP-FORMING)"/>
    <property type="match status" value="1"/>
</dbReference>
<dbReference type="PANTHER" id="PTHR14269">
    <property type="entry name" value="CDP-DIACYLGLYCEROL--GLYCEROL-3-PHOSPHATE 3-PHOSPHATIDYLTRANSFERASE-RELATED"/>
    <property type="match status" value="1"/>
</dbReference>
<dbReference type="Pfam" id="PF01066">
    <property type="entry name" value="CDP-OH_P_transf"/>
    <property type="match status" value="1"/>
</dbReference>